<gene>
    <name type="primary">SGCB</name>
</gene>
<protein>
    <recommendedName>
        <fullName>Beta-sarcoglycan</fullName>
        <shortName>Beta-SG</shortName>
    </recommendedName>
</protein>
<organism>
    <name type="scientific">Pongo abelii</name>
    <name type="common">Sumatran orangutan</name>
    <name type="synonym">Pongo pygmaeus abelii</name>
    <dbReference type="NCBI Taxonomy" id="9601"/>
    <lineage>
        <taxon>Eukaryota</taxon>
        <taxon>Metazoa</taxon>
        <taxon>Chordata</taxon>
        <taxon>Craniata</taxon>
        <taxon>Vertebrata</taxon>
        <taxon>Euteleostomi</taxon>
        <taxon>Mammalia</taxon>
        <taxon>Eutheria</taxon>
        <taxon>Euarchontoglires</taxon>
        <taxon>Primates</taxon>
        <taxon>Haplorrhini</taxon>
        <taxon>Catarrhini</taxon>
        <taxon>Hominidae</taxon>
        <taxon>Pongo</taxon>
    </lineage>
</organism>
<feature type="chain" id="PRO_0000326143" description="Beta-sarcoglycan">
    <location>
        <begin position="1"/>
        <end position="319"/>
    </location>
</feature>
<feature type="topological domain" description="Cytoplasmic" evidence="2">
    <location>
        <begin position="1"/>
        <end position="66"/>
    </location>
</feature>
<feature type="transmembrane region" description="Helical; Signal-anchor for type II membrane protein" evidence="2">
    <location>
        <begin position="67"/>
        <end position="87"/>
    </location>
</feature>
<feature type="topological domain" description="Extracellular" evidence="2">
    <location>
        <begin position="88"/>
        <end position="318"/>
    </location>
</feature>
<feature type="region of interest" description="Disordered" evidence="3">
    <location>
        <begin position="1"/>
        <end position="33"/>
    </location>
</feature>
<feature type="compositionally biased region" description="Low complexity" evidence="3">
    <location>
        <begin position="1"/>
        <end position="10"/>
    </location>
</feature>
<feature type="compositionally biased region" description="Basic and acidic residues" evidence="3">
    <location>
        <begin position="22"/>
        <end position="33"/>
    </location>
</feature>
<feature type="glycosylation site" description="N-linked (GlcNAc...) asparagine" evidence="2">
    <location>
        <position position="159"/>
    </location>
</feature>
<feature type="glycosylation site" description="N-linked (GlcNAc...) asparagine" evidence="2">
    <location>
        <position position="212"/>
    </location>
</feature>
<feature type="glycosylation site" description="N-linked (GlcNAc...) asparagine" evidence="2">
    <location>
        <position position="259"/>
    </location>
</feature>
<feature type="disulfide bond" evidence="2">
    <location>
        <begin position="289"/>
        <end position="315"/>
    </location>
</feature>
<feature type="disulfide bond" evidence="2">
    <location>
        <begin position="291"/>
        <end position="308"/>
    </location>
</feature>
<sequence length="319" mass="34875">MAAAAAAAAAEQQSSNGPVKKSMREKAVERRNVNKEHNSNFKAGYIPIDEDRLHKTGLRGRKGNLAICVIILLFILAVINLIITLVIWAVIRIGPNGCDSMEFHESGLLRFKQVSDMGVIHPLYKSTVGGRRNENLVITGNNQPIVFQQGTTKLSVENNKTSITSDIGMQFFDPRTQNILFSTDYETHEFHLPSGVKSLNVQKASTERITSNATSDLNIKVDGRAIVRGNEGVFIMGKTIEFHMGGNMELKAENSIILNGSVMVSTTRLPSSSSGDQLGSGDWVRYKLCMCADGTLFKVQVTSQNMGCQISDNPCGNTH</sequence>
<evidence type="ECO:0000250" key="1"/>
<evidence type="ECO:0000255" key="2"/>
<evidence type="ECO:0000256" key="3">
    <source>
        <dbReference type="SAM" id="MobiDB-lite"/>
    </source>
</evidence>
<evidence type="ECO:0000305" key="4"/>
<reference key="1">
    <citation type="submission" date="2004-11" db="EMBL/GenBank/DDBJ databases">
        <authorList>
            <consortium name="The German cDNA consortium"/>
        </authorList>
    </citation>
    <scope>NUCLEOTIDE SEQUENCE [LARGE SCALE MRNA]</scope>
    <source>
        <tissue>Heart</tissue>
    </source>
</reference>
<proteinExistence type="evidence at transcript level"/>
<keyword id="KW-1003">Cell membrane</keyword>
<keyword id="KW-0963">Cytoplasm</keyword>
<keyword id="KW-0206">Cytoskeleton</keyword>
<keyword id="KW-1015">Disulfide bond</keyword>
<keyword id="KW-0325">Glycoprotein</keyword>
<keyword id="KW-0472">Membrane</keyword>
<keyword id="KW-1185">Reference proteome</keyword>
<keyword id="KW-0735">Signal-anchor</keyword>
<keyword id="KW-0812">Transmembrane</keyword>
<keyword id="KW-1133">Transmembrane helix</keyword>
<accession>Q5R9U1</accession>
<name>SGCB_PONAB</name>
<comment type="function">
    <text evidence="1">Component of the sarcoglycan complex, a subcomplex of the dystrophin-glycoprotein complex which forms a link between the F-actin cytoskeleton and the extracellular matrix.</text>
</comment>
<comment type="subunit">
    <text evidence="1">Cross-link to form 2 major subcomplexes: one consisting of SGCB, SGCD and SGCG and the other consisting of SGCB and SGCD. The association between SGCB and SGCG is particularly strong while SGCA is loosely associated with the other sarcoglycans (By similarity).</text>
</comment>
<comment type="subcellular location">
    <subcellularLocation>
        <location evidence="1">Cell membrane</location>
        <location evidence="1">Sarcolemma</location>
        <topology evidence="1">Single-pass type II membrane protein</topology>
    </subcellularLocation>
    <subcellularLocation>
        <location evidence="1">Cytoplasm</location>
        <location evidence="1">Cytoskeleton</location>
    </subcellularLocation>
</comment>
<comment type="PTM">
    <text evidence="1">Disulfide bonds are present.</text>
</comment>
<comment type="similarity">
    <text evidence="4">Belongs to the sarcoglycan beta/delta/gamma/zeta family.</text>
</comment>
<dbReference type="EMBL" id="CR859291">
    <property type="protein sequence ID" value="CAH91469.1"/>
    <property type="molecule type" value="mRNA"/>
</dbReference>
<dbReference type="RefSeq" id="NP_001125865.1">
    <property type="nucleotide sequence ID" value="NM_001132393.1"/>
</dbReference>
<dbReference type="SMR" id="Q5R9U1"/>
<dbReference type="FunCoup" id="Q5R9U1">
    <property type="interactions" value="857"/>
</dbReference>
<dbReference type="STRING" id="9601.ENSPPYP00000016507"/>
<dbReference type="GlyCosmos" id="Q5R9U1">
    <property type="glycosylation" value="3 sites, No reported glycans"/>
</dbReference>
<dbReference type="Ensembl" id="ENSPPYT00000017182.3">
    <property type="protein sequence ID" value="ENSPPYP00000016507.3"/>
    <property type="gene ID" value="ENSPPYG00000014780.3"/>
</dbReference>
<dbReference type="GeneID" id="100172796"/>
<dbReference type="KEGG" id="pon:100172796"/>
<dbReference type="CTD" id="6443"/>
<dbReference type="eggNOG" id="ENOG502QUW4">
    <property type="taxonomic scope" value="Eukaryota"/>
</dbReference>
<dbReference type="GeneTree" id="ENSGT00390000008110"/>
<dbReference type="InParanoid" id="Q5R9U1"/>
<dbReference type="OMA" id="KGVQGME"/>
<dbReference type="OrthoDB" id="5843723at2759"/>
<dbReference type="Proteomes" id="UP000001595">
    <property type="component" value="Chromosome 4"/>
</dbReference>
<dbReference type="GO" id="GO:0005737">
    <property type="term" value="C:cytoplasm"/>
    <property type="evidence" value="ECO:0007669"/>
    <property type="project" value="UniProtKB-KW"/>
</dbReference>
<dbReference type="GO" id="GO:0005856">
    <property type="term" value="C:cytoskeleton"/>
    <property type="evidence" value="ECO:0007669"/>
    <property type="project" value="UniProtKB-SubCell"/>
</dbReference>
<dbReference type="GO" id="GO:0016012">
    <property type="term" value="C:sarcoglycan complex"/>
    <property type="evidence" value="ECO:0007669"/>
    <property type="project" value="Ensembl"/>
</dbReference>
<dbReference type="GO" id="GO:0042383">
    <property type="term" value="C:sarcolemma"/>
    <property type="evidence" value="ECO:0007669"/>
    <property type="project" value="UniProtKB-SubCell"/>
</dbReference>
<dbReference type="GO" id="GO:0055013">
    <property type="term" value="P:cardiac muscle cell development"/>
    <property type="evidence" value="ECO:0007669"/>
    <property type="project" value="Ensembl"/>
</dbReference>
<dbReference type="GO" id="GO:0010467">
    <property type="term" value="P:gene expression"/>
    <property type="evidence" value="ECO:0007669"/>
    <property type="project" value="Ensembl"/>
</dbReference>
<dbReference type="GO" id="GO:0042593">
    <property type="term" value="P:glucose homeostasis"/>
    <property type="evidence" value="ECO:0007669"/>
    <property type="project" value="Ensembl"/>
</dbReference>
<dbReference type="GO" id="GO:0044381">
    <property type="term" value="P:glucose import in response to insulin stimulus"/>
    <property type="evidence" value="ECO:0007669"/>
    <property type="project" value="Ensembl"/>
</dbReference>
<dbReference type="GO" id="GO:0007517">
    <property type="term" value="P:muscle organ development"/>
    <property type="evidence" value="ECO:0007669"/>
    <property type="project" value="InterPro"/>
</dbReference>
<dbReference type="GO" id="GO:0009749">
    <property type="term" value="P:response to glucose"/>
    <property type="evidence" value="ECO:0007669"/>
    <property type="project" value="Ensembl"/>
</dbReference>
<dbReference type="GO" id="GO:0097084">
    <property type="term" value="P:vascular associated smooth muscle cell development"/>
    <property type="evidence" value="ECO:0007669"/>
    <property type="project" value="Ensembl"/>
</dbReference>
<dbReference type="InterPro" id="IPR006875">
    <property type="entry name" value="Sarcoglycan"/>
</dbReference>
<dbReference type="InterPro" id="IPR027659">
    <property type="entry name" value="Sgcb"/>
</dbReference>
<dbReference type="PANTHER" id="PTHR21142:SF2">
    <property type="entry name" value="BETA-SARCOGLYCAN"/>
    <property type="match status" value="1"/>
</dbReference>
<dbReference type="PANTHER" id="PTHR21142">
    <property type="entry name" value="SARCOGLYCANS"/>
    <property type="match status" value="1"/>
</dbReference>
<dbReference type="Pfam" id="PF04790">
    <property type="entry name" value="Sarcoglycan_1"/>
    <property type="match status" value="1"/>
</dbReference>